<reference key="1">
    <citation type="journal article" date="2005" name="Proc. Natl. Acad. Sci. U.S.A.">
        <title>Whole genome sequence of Staphylococcus saprophyticus reveals the pathogenesis of uncomplicated urinary tract infection.</title>
        <authorList>
            <person name="Kuroda M."/>
            <person name="Yamashita A."/>
            <person name="Hirakawa H."/>
            <person name="Kumano M."/>
            <person name="Morikawa K."/>
            <person name="Higashide M."/>
            <person name="Maruyama A."/>
            <person name="Inose Y."/>
            <person name="Matoba K."/>
            <person name="Toh H."/>
            <person name="Kuhara S."/>
            <person name="Hattori M."/>
            <person name="Ohta T."/>
        </authorList>
    </citation>
    <scope>NUCLEOTIDE SEQUENCE [LARGE SCALE GENOMIC DNA]</scope>
    <source>
        <strain>ATCC 15305 / DSM 20229 / NCIMB 8711 / NCTC 7292 / S-41</strain>
    </source>
</reference>
<proteinExistence type="inferred from homology"/>
<comment type="function">
    <text evidence="1">Member of the two-component regulatory system GraR/GraS involved in resistance against cationic antimicrobial peptides (CAMPs).</text>
</comment>
<comment type="subcellular location">
    <subcellularLocation>
        <location evidence="1">Cytoplasm</location>
    </subcellularLocation>
</comment>
<comment type="PTM">
    <text evidence="1">Phosphorylated by GraS.</text>
</comment>
<organism>
    <name type="scientific">Staphylococcus saprophyticus subsp. saprophyticus (strain ATCC 15305 / DSM 20229 / NCIMB 8711 / NCTC 7292 / S-41)</name>
    <dbReference type="NCBI Taxonomy" id="342451"/>
    <lineage>
        <taxon>Bacteria</taxon>
        <taxon>Bacillati</taxon>
        <taxon>Bacillota</taxon>
        <taxon>Bacilli</taxon>
        <taxon>Bacillales</taxon>
        <taxon>Staphylococcaceae</taxon>
        <taxon>Staphylococcus</taxon>
    </lineage>
</organism>
<name>GRAR_STAS1</name>
<dbReference type="EMBL" id="AP008934">
    <property type="protein sequence ID" value="BAE19207.1"/>
    <property type="molecule type" value="Genomic_DNA"/>
</dbReference>
<dbReference type="RefSeq" id="WP_011303709.1">
    <property type="nucleotide sequence ID" value="NZ_MTGA01000039.1"/>
</dbReference>
<dbReference type="SMR" id="Q49VK3"/>
<dbReference type="GeneID" id="3615626"/>
<dbReference type="KEGG" id="ssp:SSP2062"/>
<dbReference type="PATRIC" id="fig|342451.11.peg.2055"/>
<dbReference type="eggNOG" id="COG0745">
    <property type="taxonomic scope" value="Bacteria"/>
</dbReference>
<dbReference type="HOGENOM" id="CLU_000445_30_3_9"/>
<dbReference type="OrthoDB" id="9790442at2"/>
<dbReference type="Proteomes" id="UP000006371">
    <property type="component" value="Chromosome"/>
</dbReference>
<dbReference type="GO" id="GO:0005829">
    <property type="term" value="C:cytosol"/>
    <property type="evidence" value="ECO:0007669"/>
    <property type="project" value="TreeGrafter"/>
</dbReference>
<dbReference type="GO" id="GO:0032993">
    <property type="term" value="C:protein-DNA complex"/>
    <property type="evidence" value="ECO:0007669"/>
    <property type="project" value="TreeGrafter"/>
</dbReference>
<dbReference type="GO" id="GO:0000156">
    <property type="term" value="F:phosphorelay response regulator activity"/>
    <property type="evidence" value="ECO:0007669"/>
    <property type="project" value="TreeGrafter"/>
</dbReference>
<dbReference type="GO" id="GO:0000976">
    <property type="term" value="F:transcription cis-regulatory region binding"/>
    <property type="evidence" value="ECO:0007669"/>
    <property type="project" value="TreeGrafter"/>
</dbReference>
<dbReference type="GO" id="GO:0006355">
    <property type="term" value="P:regulation of DNA-templated transcription"/>
    <property type="evidence" value="ECO:0007669"/>
    <property type="project" value="InterPro"/>
</dbReference>
<dbReference type="GO" id="GO:0046677">
    <property type="term" value="P:response to antibiotic"/>
    <property type="evidence" value="ECO:0007669"/>
    <property type="project" value="UniProtKB-KW"/>
</dbReference>
<dbReference type="CDD" id="cd18159">
    <property type="entry name" value="REC_OmpR_NsrR-like"/>
    <property type="match status" value="1"/>
</dbReference>
<dbReference type="CDD" id="cd00383">
    <property type="entry name" value="trans_reg_C"/>
    <property type="match status" value="1"/>
</dbReference>
<dbReference type="Gene3D" id="3.40.50.2300">
    <property type="match status" value="1"/>
</dbReference>
<dbReference type="Gene3D" id="1.10.10.10">
    <property type="entry name" value="Winged helix-like DNA-binding domain superfamily/Winged helix DNA-binding domain"/>
    <property type="match status" value="1"/>
</dbReference>
<dbReference type="InterPro" id="IPR011006">
    <property type="entry name" value="CheY-like_superfamily"/>
</dbReference>
<dbReference type="InterPro" id="IPR001867">
    <property type="entry name" value="OmpR/PhoB-type_DNA-bd"/>
</dbReference>
<dbReference type="InterPro" id="IPR016032">
    <property type="entry name" value="Sig_transdc_resp-reg_C-effctor"/>
</dbReference>
<dbReference type="InterPro" id="IPR001789">
    <property type="entry name" value="Sig_transdc_resp-reg_receiver"/>
</dbReference>
<dbReference type="InterPro" id="IPR039420">
    <property type="entry name" value="WalR-like"/>
</dbReference>
<dbReference type="InterPro" id="IPR036388">
    <property type="entry name" value="WH-like_DNA-bd_sf"/>
</dbReference>
<dbReference type="PANTHER" id="PTHR48111">
    <property type="entry name" value="REGULATOR OF RPOS"/>
    <property type="match status" value="1"/>
</dbReference>
<dbReference type="PANTHER" id="PTHR48111:SF27">
    <property type="entry name" value="SENSORY TRANSDUCTION PROTEIN BCER"/>
    <property type="match status" value="1"/>
</dbReference>
<dbReference type="Pfam" id="PF00072">
    <property type="entry name" value="Response_reg"/>
    <property type="match status" value="1"/>
</dbReference>
<dbReference type="Pfam" id="PF00486">
    <property type="entry name" value="Trans_reg_C"/>
    <property type="match status" value="1"/>
</dbReference>
<dbReference type="SMART" id="SM00448">
    <property type="entry name" value="REC"/>
    <property type="match status" value="1"/>
</dbReference>
<dbReference type="SMART" id="SM00862">
    <property type="entry name" value="Trans_reg_C"/>
    <property type="match status" value="1"/>
</dbReference>
<dbReference type="SUPFAM" id="SSF46894">
    <property type="entry name" value="C-terminal effector domain of the bipartite response regulators"/>
    <property type="match status" value="1"/>
</dbReference>
<dbReference type="SUPFAM" id="SSF52172">
    <property type="entry name" value="CheY-like"/>
    <property type="match status" value="1"/>
</dbReference>
<dbReference type="PROSITE" id="PS51755">
    <property type="entry name" value="OMPR_PHOB"/>
    <property type="match status" value="1"/>
</dbReference>
<dbReference type="PROSITE" id="PS50110">
    <property type="entry name" value="RESPONSE_REGULATORY"/>
    <property type="match status" value="1"/>
</dbReference>
<keyword id="KW-0010">Activator</keyword>
<keyword id="KW-0046">Antibiotic resistance</keyword>
<keyword id="KW-0963">Cytoplasm</keyword>
<keyword id="KW-0238">DNA-binding</keyword>
<keyword id="KW-0597">Phosphoprotein</keyword>
<keyword id="KW-1185">Reference proteome</keyword>
<keyword id="KW-0678">Repressor</keyword>
<keyword id="KW-0804">Transcription</keyword>
<keyword id="KW-0805">Transcription regulation</keyword>
<keyword id="KW-0902">Two-component regulatory system</keyword>
<keyword id="KW-0843">Virulence</keyword>
<evidence type="ECO:0000250" key="1"/>
<evidence type="ECO:0000255" key="2">
    <source>
        <dbReference type="PROSITE-ProRule" id="PRU00169"/>
    </source>
</evidence>
<evidence type="ECO:0000255" key="3">
    <source>
        <dbReference type="PROSITE-ProRule" id="PRU01091"/>
    </source>
</evidence>
<gene>
    <name type="primary">graR</name>
    <name type="ordered locus">SSP2062</name>
</gene>
<sequence length="224" mass="26089">MDILLVEDDMTLFKELSEELEQWDFNVNGIDDFNDVMTKFESVNPAIVIMDVKLPKYDGFYWTRKIREVSNTPILFLSSRDNPMDQVMSMELGADDYVQKPFNTNVLIAKLQAIYRRVYQFSLDEKRVLSWQDAILDLSKDSINKEDHQIYLSKTEMIILEMLVKKQNQIVTRDTLITALWDDEAFVSDNTLTVNVNRLRKKLADIDMNDAIETKIGKGYMAHG</sequence>
<protein>
    <recommendedName>
        <fullName>Response regulator protein GraR</fullName>
    </recommendedName>
    <alternativeName>
        <fullName>Glycopeptide resistance-associated protein R</fullName>
    </alternativeName>
</protein>
<feature type="chain" id="PRO_0000347912" description="Response regulator protein GraR">
    <location>
        <begin position="1"/>
        <end position="224"/>
    </location>
</feature>
<feature type="domain" description="Response regulatory" evidence="2">
    <location>
        <begin position="2"/>
        <end position="115"/>
    </location>
</feature>
<feature type="DNA-binding region" description="OmpR/PhoB-type" evidence="3">
    <location>
        <begin position="126"/>
        <end position="224"/>
    </location>
</feature>
<feature type="modified residue" description="4-aspartylphosphate" evidence="2">
    <location>
        <position position="51"/>
    </location>
</feature>
<accession>Q49VK3</accession>